<proteinExistence type="inferred from homology"/>
<comment type="function">
    <text evidence="1">Catalyzes the phosphorylation of the hydroxyl group of 4-methyl-5-beta-hydroxyethylthiazole (THZ).</text>
</comment>
<comment type="catalytic activity">
    <reaction evidence="1">
        <text>5-(2-hydroxyethyl)-4-methylthiazole + ATP = 4-methyl-5-(2-phosphooxyethyl)-thiazole + ADP + H(+)</text>
        <dbReference type="Rhea" id="RHEA:24212"/>
        <dbReference type="ChEBI" id="CHEBI:15378"/>
        <dbReference type="ChEBI" id="CHEBI:17957"/>
        <dbReference type="ChEBI" id="CHEBI:30616"/>
        <dbReference type="ChEBI" id="CHEBI:58296"/>
        <dbReference type="ChEBI" id="CHEBI:456216"/>
        <dbReference type="EC" id="2.7.1.50"/>
    </reaction>
</comment>
<comment type="cofactor">
    <cofactor evidence="1">
        <name>Mg(2+)</name>
        <dbReference type="ChEBI" id="CHEBI:18420"/>
    </cofactor>
</comment>
<comment type="pathway">
    <text evidence="1">Cofactor biosynthesis; thiamine diphosphate biosynthesis; 4-methyl-5-(2-phosphoethyl)-thiazole from 5-(2-hydroxyethyl)-4-methylthiazole: step 1/1.</text>
</comment>
<comment type="similarity">
    <text evidence="1">Belongs to the Thz kinase family.</text>
</comment>
<organism>
    <name type="scientific">Thermoanaerobacter sp. (strain X514)</name>
    <dbReference type="NCBI Taxonomy" id="399726"/>
    <lineage>
        <taxon>Bacteria</taxon>
        <taxon>Bacillati</taxon>
        <taxon>Bacillota</taxon>
        <taxon>Clostridia</taxon>
        <taxon>Thermoanaerobacterales</taxon>
        <taxon>Thermoanaerobacteraceae</taxon>
        <taxon>Thermoanaerobacter</taxon>
    </lineage>
</organism>
<name>THIM_THEPX</name>
<protein>
    <recommendedName>
        <fullName evidence="1">Hydroxyethylthiazole kinase</fullName>
        <ecNumber evidence="1">2.7.1.50</ecNumber>
    </recommendedName>
    <alternativeName>
        <fullName evidence="1">4-methyl-5-beta-hydroxyethylthiazole kinase</fullName>
        <shortName evidence="1">TH kinase</shortName>
        <shortName evidence="1">Thz kinase</shortName>
    </alternativeName>
</protein>
<accession>B0K3V0</accession>
<reference key="1">
    <citation type="submission" date="2008-01" db="EMBL/GenBank/DDBJ databases">
        <title>Complete sequence of Thermoanaerobacter sp. X514.</title>
        <authorList>
            <consortium name="US DOE Joint Genome Institute"/>
            <person name="Copeland A."/>
            <person name="Lucas S."/>
            <person name="Lapidus A."/>
            <person name="Barry K."/>
            <person name="Glavina del Rio T."/>
            <person name="Dalin E."/>
            <person name="Tice H."/>
            <person name="Pitluck S."/>
            <person name="Bruce D."/>
            <person name="Goodwin L."/>
            <person name="Saunders E."/>
            <person name="Brettin T."/>
            <person name="Detter J.C."/>
            <person name="Han C."/>
            <person name="Schmutz J."/>
            <person name="Larimer F."/>
            <person name="Land M."/>
            <person name="Hauser L."/>
            <person name="Kyrpides N."/>
            <person name="Kim E."/>
            <person name="Hemme C."/>
            <person name="Fields M.W."/>
            <person name="He Z."/>
            <person name="Zhou J."/>
            <person name="Richardson P."/>
        </authorList>
    </citation>
    <scope>NUCLEOTIDE SEQUENCE [LARGE SCALE GENOMIC DNA]</scope>
    <source>
        <strain>X514</strain>
    </source>
</reference>
<dbReference type="EC" id="2.7.1.50" evidence="1"/>
<dbReference type="EMBL" id="CP000923">
    <property type="protein sequence ID" value="ABY91875.1"/>
    <property type="molecule type" value="Genomic_DNA"/>
</dbReference>
<dbReference type="RefSeq" id="WP_003868159.1">
    <property type="nucleotide sequence ID" value="NC_010320.1"/>
</dbReference>
<dbReference type="SMR" id="B0K3V0"/>
<dbReference type="KEGG" id="tex:Teth514_0567"/>
<dbReference type="HOGENOM" id="CLU_019943_0_1_9"/>
<dbReference type="UniPathway" id="UPA00060">
    <property type="reaction ID" value="UER00139"/>
</dbReference>
<dbReference type="Proteomes" id="UP000002155">
    <property type="component" value="Chromosome"/>
</dbReference>
<dbReference type="GO" id="GO:0005524">
    <property type="term" value="F:ATP binding"/>
    <property type="evidence" value="ECO:0007669"/>
    <property type="project" value="UniProtKB-UniRule"/>
</dbReference>
<dbReference type="GO" id="GO:0004417">
    <property type="term" value="F:hydroxyethylthiazole kinase activity"/>
    <property type="evidence" value="ECO:0007669"/>
    <property type="project" value="UniProtKB-UniRule"/>
</dbReference>
<dbReference type="GO" id="GO:0000287">
    <property type="term" value="F:magnesium ion binding"/>
    <property type="evidence" value="ECO:0007669"/>
    <property type="project" value="UniProtKB-UniRule"/>
</dbReference>
<dbReference type="GO" id="GO:0009228">
    <property type="term" value="P:thiamine biosynthetic process"/>
    <property type="evidence" value="ECO:0007669"/>
    <property type="project" value="UniProtKB-KW"/>
</dbReference>
<dbReference type="GO" id="GO:0009229">
    <property type="term" value="P:thiamine diphosphate biosynthetic process"/>
    <property type="evidence" value="ECO:0007669"/>
    <property type="project" value="UniProtKB-UniRule"/>
</dbReference>
<dbReference type="CDD" id="cd01170">
    <property type="entry name" value="THZ_kinase"/>
    <property type="match status" value="1"/>
</dbReference>
<dbReference type="Gene3D" id="3.40.1190.20">
    <property type="match status" value="1"/>
</dbReference>
<dbReference type="HAMAP" id="MF_00228">
    <property type="entry name" value="Thz_kinase"/>
    <property type="match status" value="1"/>
</dbReference>
<dbReference type="InterPro" id="IPR000417">
    <property type="entry name" value="Hyethyz_kinase"/>
</dbReference>
<dbReference type="InterPro" id="IPR029056">
    <property type="entry name" value="Ribokinase-like"/>
</dbReference>
<dbReference type="NCBIfam" id="NF006830">
    <property type="entry name" value="PRK09355.1"/>
    <property type="match status" value="1"/>
</dbReference>
<dbReference type="NCBIfam" id="TIGR00694">
    <property type="entry name" value="thiM"/>
    <property type="match status" value="1"/>
</dbReference>
<dbReference type="Pfam" id="PF02110">
    <property type="entry name" value="HK"/>
    <property type="match status" value="1"/>
</dbReference>
<dbReference type="PIRSF" id="PIRSF000513">
    <property type="entry name" value="Thz_kinase"/>
    <property type="match status" value="1"/>
</dbReference>
<dbReference type="PRINTS" id="PR01099">
    <property type="entry name" value="HYETHTZKNASE"/>
</dbReference>
<dbReference type="SUPFAM" id="SSF53613">
    <property type="entry name" value="Ribokinase-like"/>
    <property type="match status" value="1"/>
</dbReference>
<evidence type="ECO:0000255" key="1">
    <source>
        <dbReference type="HAMAP-Rule" id="MF_00228"/>
    </source>
</evidence>
<keyword id="KW-0067">ATP-binding</keyword>
<keyword id="KW-0418">Kinase</keyword>
<keyword id="KW-0460">Magnesium</keyword>
<keyword id="KW-0479">Metal-binding</keyword>
<keyword id="KW-0547">Nucleotide-binding</keyword>
<keyword id="KW-0784">Thiamine biosynthesis</keyword>
<keyword id="KW-0808">Transferase</keyword>
<sequence length="263" mass="27880">MKKELLKILREKKPLVHHITNVVTVNDCANITLAIGALPVMAHALEEVEEMVSAADALVLNIGTLTNEQVEAMIKAGKAANRFKVPVILDPVGAGATKLRTQSSKKILEEVKISVIKGNSAEISILAGKGGKIRGVESQGGVDDIAEAAKDLANAYNVVVAMSGATDIITDGKRIAYVKNGHPMMGTITGTGCMLTSVVASFCGVCEDYFETTIEAFVAFGIAGERAAQSSNVKGPGSFKVTFFDEIYNLTPEIIEKDKKVEV</sequence>
<feature type="chain" id="PRO_1000100430" description="Hydroxyethylthiazole kinase">
    <location>
        <begin position="1"/>
        <end position="263"/>
    </location>
</feature>
<feature type="binding site" evidence="1">
    <location>
        <position position="41"/>
    </location>
    <ligand>
        <name>substrate</name>
    </ligand>
</feature>
<feature type="binding site" evidence="1">
    <location>
        <position position="117"/>
    </location>
    <ligand>
        <name>ATP</name>
        <dbReference type="ChEBI" id="CHEBI:30616"/>
    </ligand>
</feature>
<feature type="binding site" evidence="1">
    <location>
        <position position="163"/>
    </location>
    <ligand>
        <name>ATP</name>
        <dbReference type="ChEBI" id="CHEBI:30616"/>
    </ligand>
</feature>
<feature type="binding site" evidence="1">
    <location>
        <position position="190"/>
    </location>
    <ligand>
        <name>substrate</name>
    </ligand>
</feature>
<gene>
    <name evidence="1" type="primary">thiM</name>
    <name type="ordered locus">Teth514_0567</name>
</gene>